<reference key="1">
    <citation type="submission" date="2007-02" db="EMBL/GenBank/DDBJ databases">
        <title>Complete sequence of chromosome of Yersinia pestis Pestoides F.</title>
        <authorList>
            <consortium name="US DOE Joint Genome Institute"/>
            <person name="Copeland A."/>
            <person name="Lucas S."/>
            <person name="Lapidus A."/>
            <person name="Barry K."/>
            <person name="Detter J.C."/>
            <person name="Glavina del Rio T."/>
            <person name="Hammon N."/>
            <person name="Israni S."/>
            <person name="Dalin E."/>
            <person name="Tice H."/>
            <person name="Pitluck S."/>
            <person name="Di Bartolo G."/>
            <person name="Chain P."/>
            <person name="Malfatti S."/>
            <person name="Shin M."/>
            <person name="Vergez L."/>
            <person name="Schmutz J."/>
            <person name="Larimer F."/>
            <person name="Land M."/>
            <person name="Hauser L."/>
            <person name="Worsham P."/>
            <person name="Chu M."/>
            <person name="Bearden S."/>
            <person name="Garcia E."/>
            <person name="Richardson P."/>
        </authorList>
    </citation>
    <scope>NUCLEOTIDE SEQUENCE [LARGE SCALE GENOMIC DNA]</scope>
    <source>
        <strain>Pestoides F</strain>
    </source>
</reference>
<accession>A4TJU5</accession>
<dbReference type="EC" id="1.2.1.71" evidence="1"/>
<dbReference type="EMBL" id="CP000668">
    <property type="protein sequence ID" value="ABP39557.1"/>
    <property type="molecule type" value="Genomic_DNA"/>
</dbReference>
<dbReference type="RefSeq" id="WP_011906226.1">
    <property type="nucleotide sequence ID" value="NZ_CP009715.1"/>
</dbReference>
<dbReference type="SMR" id="A4TJU5"/>
<dbReference type="KEGG" id="ypp:YPDSF_1159"/>
<dbReference type="UniPathway" id="UPA00185">
    <property type="reaction ID" value="UER00282"/>
</dbReference>
<dbReference type="GO" id="GO:0043824">
    <property type="term" value="F:succinylglutamate-semialdehyde dehydrogenase activity"/>
    <property type="evidence" value="ECO:0007669"/>
    <property type="project" value="UniProtKB-EC"/>
</dbReference>
<dbReference type="GO" id="GO:0019544">
    <property type="term" value="P:arginine catabolic process to glutamate"/>
    <property type="evidence" value="ECO:0007669"/>
    <property type="project" value="UniProtKB-UniRule"/>
</dbReference>
<dbReference type="GO" id="GO:0019545">
    <property type="term" value="P:arginine catabolic process to succinate"/>
    <property type="evidence" value="ECO:0007669"/>
    <property type="project" value="UniProtKB-UniRule"/>
</dbReference>
<dbReference type="CDD" id="cd07095">
    <property type="entry name" value="ALDH_SGSD_AstD"/>
    <property type="match status" value="1"/>
</dbReference>
<dbReference type="FunFam" id="3.40.309.10:FF:000013">
    <property type="entry name" value="N-succinylglutamate 5-semialdehyde dehydrogenase"/>
    <property type="match status" value="1"/>
</dbReference>
<dbReference type="FunFam" id="3.40.605.10:FF:000010">
    <property type="entry name" value="N-succinylglutamate 5-semialdehyde dehydrogenase"/>
    <property type="match status" value="1"/>
</dbReference>
<dbReference type="Gene3D" id="3.40.605.10">
    <property type="entry name" value="Aldehyde Dehydrogenase, Chain A, domain 1"/>
    <property type="match status" value="1"/>
</dbReference>
<dbReference type="Gene3D" id="3.40.309.10">
    <property type="entry name" value="Aldehyde Dehydrogenase, Chain A, domain 2"/>
    <property type="match status" value="1"/>
</dbReference>
<dbReference type="HAMAP" id="MF_01174">
    <property type="entry name" value="Aldedh_AstD"/>
    <property type="match status" value="1"/>
</dbReference>
<dbReference type="InterPro" id="IPR016161">
    <property type="entry name" value="Ald_DH/histidinol_DH"/>
</dbReference>
<dbReference type="InterPro" id="IPR016163">
    <property type="entry name" value="Ald_DH_C"/>
</dbReference>
<dbReference type="InterPro" id="IPR016160">
    <property type="entry name" value="Ald_DH_CS_CYS"/>
</dbReference>
<dbReference type="InterPro" id="IPR029510">
    <property type="entry name" value="Ald_DH_CS_GLU"/>
</dbReference>
<dbReference type="InterPro" id="IPR016162">
    <property type="entry name" value="Ald_DH_N"/>
</dbReference>
<dbReference type="InterPro" id="IPR015590">
    <property type="entry name" value="Aldehyde_DH_dom"/>
</dbReference>
<dbReference type="InterPro" id="IPR017649">
    <property type="entry name" value="SuccinylGlu_semiald_DH_AstD"/>
</dbReference>
<dbReference type="NCBIfam" id="TIGR03240">
    <property type="entry name" value="arg_catab_astD"/>
    <property type="match status" value="1"/>
</dbReference>
<dbReference type="NCBIfam" id="NF006992">
    <property type="entry name" value="PRK09457.1"/>
    <property type="match status" value="1"/>
</dbReference>
<dbReference type="PANTHER" id="PTHR11699">
    <property type="entry name" value="ALDEHYDE DEHYDROGENASE-RELATED"/>
    <property type="match status" value="1"/>
</dbReference>
<dbReference type="Pfam" id="PF00171">
    <property type="entry name" value="Aldedh"/>
    <property type="match status" value="1"/>
</dbReference>
<dbReference type="SUPFAM" id="SSF53720">
    <property type="entry name" value="ALDH-like"/>
    <property type="match status" value="1"/>
</dbReference>
<dbReference type="PROSITE" id="PS00070">
    <property type="entry name" value="ALDEHYDE_DEHYDR_CYS"/>
    <property type="match status" value="1"/>
</dbReference>
<dbReference type="PROSITE" id="PS00687">
    <property type="entry name" value="ALDEHYDE_DEHYDR_GLU"/>
    <property type="match status" value="1"/>
</dbReference>
<comment type="function">
    <text evidence="1">Catalyzes the NAD-dependent reduction of succinylglutamate semialdehyde into succinylglutamate.</text>
</comment>
<comment type="catalytic activity">
    <reaction evidence="1">
        <text>N-succinyl-L-glutamate 5-semialdehyde + NAD(+) + H2O = N-succinyl-L-glutamate + NADH + 2 H(+)</text>
        <dbReference type="Rhea" id="RHEA:10812"/>
        <dbReference type="ChEBI" id="CHEBI:15377"/>
        <dbReference type="ChEBI" id="CHEBI:15378"/>
        <dbReference type="ChEBI" id="CHEBI:57540"/>
        <dbReference type="ChEBI" id="CHEBI:57945"/>
        <dbReference type="ChEBI" id="CHEBI:58520"/>
        <dbReference type="ChEBI" id="CHEBI:58763"/>
        <dbReference type="EC" id="1.2.1.71"/>
    </reaction>
</comment>
<comment type="pathway">
    <text evidence="1">Amino-acid degradation; L-arginine degradation via AST pathway; L-glutamate and succinate from L-arginine: step 4/5.</text>
</comment>
<comment type="similarity">
    <text evidence="1">Belongs to the aldehyde dehydrogenase family. AstD subfamily.</text>
</comment>
<evidence type="ECO:0000255" key="1">
    <source>
        <dbReference type="HAMAP-Rule" id="MF_01174"/>
    </source>
</evidence>
<organism>
    <name type="scientific">Yersinia pestis (strain Pestoides F)</name>
    <dbReference type="NCBI Taxonomy" id="386656"/>
    <lineage>
        <taxon>Bacteria</taxon>
        <taxon>Pseudomonadati</taxon>
        <taxon>Pseudomonadota</taxon>
        <taxon>Gammaproteobacteria</taxon>
        <taxon>Enterobacterales</taxon>
        <taxon>Yersiniaceae</taxon>
        <taxon>Yersinia</taxon>
    </lineage>
</organism>
<proteinExistence type="inferred from homology"/>
<gene>
    <name evidence="1" type="primary">astD</name>
    <name type="ordered locus">YPDSF_1159</name>
</gene>
<feature type="chain" id="PRO_1000065771" description="N-succinylglutamate 5-semialdehyde dehydrogenase">
    <location>
        <begin position="1"/>
        <end position="505"/>
    </location>
</feature>
<feature type="active site" evidence="1">
    <location>
        <position position="257"/>
    </location>
</feature>
<feature type="active site" evidence="1">
    <location>
        <position position="291"/>
    </location>
</feature>
<feature type="binding site" evidence="1">
    <location>
        <begin position="234"/>
        <end position="239"/>
    </location>
    <ligand>
        <name>NAD(+)</name>
        <dbReference type="ChEBI" id="CHEBI:57540"/>
    </ligand>
</feature>
<sequence length="505" mass="54791">MSQHVMFNAVLSSHPALFIQGEWRIGNGVSFEKQDPMSQQRLWQARAADHTDVTLACHAARAAFPAWARASLEQRATVIQQFAALLEQHKQSLARTISLETSKPYWETLTEVQAMIGKVAISLQAYQTRTGHSQTPMGDSMSVLRHRPHGVLAVFGPYNFPGHLPNGHIVPALLAGNTVVFKPSELTPWTAEETVKLWQQAGIPDGVLNLVQGGRETGEALAAQPDIDGLLFTGSAHTGYHLHRQLAGQPEKMLALEMGGNNALIVEQVKDRDAVVNLAIQSPFISAGQRCTCSRRLLVKTGAEGDAFLLRFTAVAQALRIGRWDEQPAPFMGAVISSQAAERMLAAQQHLLLLGGESLLNMTRPDSQSALLTPGIIDITNISEVPDEEYFGPLVSVIRYTDFTEALKIANQTRFGLAVGLVSEDRQQFEQLLLEARAGIVNWNKPLTGASSAAPFGGVGASGNHRPSAFYAADYCAWPMASLECEHLTLPATLSPGISFDLPKV</sequence>
<name>ASTD_YERPP</name>
<protein>
    <recommendedName>
        <fullName evidence="1">N-succinylglutamate 5-semialdehyde dehydrogenase</fullName>
        <ecNumber evidence="1">1.2.1.71</ecNumber>
    </recommendedName>
    <alternativeName>
        <fullName evidence="1">Succinylglutamic semialdehyde dehydrogenase</fullName>
        <shortName evidence="1">SGSD</shortName>
    </alternativeName>
</protein>
<keyword id="KW-0056">Arginine metabolism</keyword>
<keyword id="KW-0520">NAD</keyword>
<keyword id="KW-0560">Oxidoreductase</keyword>